<name>CRSH1_ORYSJ</name>
<evidence type="ECO:0000255" key="1"/>
<evidence type="ECO:0000255" key="2">
    <source>
        <dbReference type="PROSITE-ProRule" id="PRU00448"/>
    </source>
</evidence>
<evidence type="ECO:0000255" key="3">
    <source>
        <dbReference type="PROSITE-ProRule" id="PRU01175"/>
    </source>
</evidence>
<evidence type="ECO:0000256" key="4">
    <source>
        <dbReference type="SAM" id="MobiDB-lite"/>
    </source>
</evidence>
<evidence type="ECO:0000269" key="5">
    <source>
    </source>
</evidence>
<evidence type="ECO:0000303" key="6">
    <source>
    </source>
</evidence>
<evidence type="ECO:0000303" key="7">
    <source ref="1"/>
</evidence>
<evidence type="ECO:0000305" key="8"/>
<evidence type="ECO:0000305" key="9">
    <source>
    </source>
</evidence>
<evidence type="ECO:0000312" key="10">
    <source>
        <dbReference type="EMBL" id="AAT93920.1"/>
    </source>
</evidence>
<evidence type="ECO:0000312" key="11">
    <source>
        <dbReference type="EMBL" id="BAS92404.1"/>
    </source>
</evidence>
<evidence type="ECO:0000312" key="12">
    <source>
        <dbReference type="EMBL" id="EEE62424.1"/>
    </source>
</evidence>
<feature type="transit peptide" description="Chloroplast" evidence="1">
    <location>
        <begin position="1"/>
        <end position="69"/>
    </location>
</feature>
<feature type="chain" id="PRO_0000429854" description="GTP diphosphokinase CRSH1, chloroplastic">
    <location>
        <begin position="70"/>
        <end position="583"/>
    </location>
</feature>
<feature type="domain" description="HD" evidence="3">
    <location>
        <begin position="119"/>
        <end position="219"/>
    </location>
</feature>
<feature type="domain" description="EF-hand 1" evidence="2">
    <location>
        <begin position="473"/>
        <end position="508"/>
    </location>
</feature>
<feature type="domain" description="EF-hand 2" evidence="2">
    <location>
        <begin position="510"/>
        <end position="542"/>
    </location>
</feature>
<feature type="region of interest" description="Disordered" evidence="4">
    <location>
        <begin position="1"/>
        <end position="68"/>
    </location>
</feature>
<feature type="compositionally biased region" description="Low complexity" evidence="4">
    <location>
        <begin position="1"/>
        <end position="13"/>
    </location>
</feature>
<feature type="compositionally biased region" description="Basic residues" evidence="4">
    <location>
        <begin position="19"/>
        <end position="39"/>
    </location>
</feature>
<feature type="compositionally biased region" description="Low complexity" evidence="4">
    <location>
        <begin position="40"/>
        <end position="66"/>
    </location>
</feature>
<feature type="binding site" evidence="2">
    <location>
        <position position="486"/>
    </location>
    <ligand>
        <name>Ca(2+)</name>
        <dbReference type="ChEBI" id="CHEBI:29108"/>
        <label>1</label>
    </ligand>
</feature>
<feature type="binding site" evidence="2">
    <location>
        <position position="488"/>
    </location>
    <ligand>
        <name>Ca(2+)</name>
        <dbReference type="ChEBI" id="CHEBI:29108"/>
        <label>1</label>
    </ligand>
</feature>
<feature type="binding site" evidence="2">
    <location>
        <position position="490"/>
    </location>
    <ligand>
        <name>Ca(2+)</name>
        <dbReference type="ChEBI" id="CHEBI:29108"/>
        <label>1</label>
    </ligand>
</feature>
<feature type="binding site" evidence="2">
    <location>
        <position position="492"/>
    </location>
    <ligand>
        <name>Ca(2+)</name>
        <dbReference type="ChEBI" id="CHEBI:29108"/>
        <label>1</label>
    </ligand>
</feature>
<feature type="binding site" evidence="2">
    <location>
        <position position="497"/>
    </location>
    <ligand>
        <name>Ca(2+)</name>
        <dbReference type="ChEBI" id="CHEBI:29108"/>
        <label>1</label>
    </ligand>
</feature>
<feature type="binding site" evidence="2">
    <location>
        <position position="520"/>
    </location>
    <ligand>
        <name>Ca(2+)</name>
        <dbReference type="ChEBI" id="CHEBI:29108"/>
        <label>2</label>
    </ligand>
</feature>
<feature type="binding site" evidence="2">
    <location>
        <position position="522"/>
    </location>
    <ligand>
        <name>Ca(2+)</name>
        <dbReference type="ChEBI" id="CHEBI:29108"/>
        <label>2</label>
    </ligand>
</feature>
<feature type="binding site" evidence="2">
    <location>
        <position position="524"/>
    </location>
    <ligand>
        <name>Ca(2+)</name>
        <dbReference type="ChEBI" id="CHEBI:29108"/>
        <label>2</label>
    </ligand>
</feature>
<feature type="binding site" evidence="2">
    <location>
        <position position="526"/>
    </location>
    <ligand>
        <name>Ca(2+)</name>
        <dbReference type="ChEBI" id="CHEBI:29108"/>
        <label>2</label>
    </ligand>
</feature>
<feature type="binding site" evidence="2">
    <location>
        <position position="531"/>
    </location>
    <ligand>
        <name>Ca(2+)</name>
        <dbReference type="ChEBI" id="CHEBI:29108"/>
        <label>2</label>
    </ligand>
</feature>
<feature type="sequence conflict" description="In Ref. 1; BAB21485." evidence="8" ref="1">
    <original>D</original>
    <variation>N</variation>
    <location>
        <position position="223"/>
    </location>
</feature>
<feature type="sequence conflict" description="In Ref. 7; AK121808." evidence="8" ref="7">
    <original>G</original>
    <variation>S</variation>
    <location>
        <position position="525"/>
    </location>
</feature>
<proteinExistence type="evidence at protein level"/>
<dbReference type="EC" id="2.7.6.5" evidence="5"/>
<dbReference type="EMBL" id="AB042936">
    <property type="protein sequence ID" value="BAB21485.1"/>
    <property type="molecule type" value="mRNA"/>
</dbReference>
<dbReference type="EMBL" id="AC137614">
    <property type="protein sequence ID" value="AAT93920.1"/>
    <property type="molecule type" value="Genomic_DNA"/>
</dbReference>
<dbReference type="EMBL" id="AP008211">
    <property type="protein sequence ID" value="BAF16638.1"/>
    <property type="molecule type" value="Genomic_DNA"/>
</dbReference>
<dbReference type="EMBL" id="AP014961">
    <property type="protein sequence ID" value="BAS92404.1"/>
    <property type="molecule type" value="Genomic_DNA"/>
</dbReference>
<dbReference type="EMBL" id="CM000142">
    <property type="protein sequence ID" value="EEE62424.1"/>
    <property type="molecule type" value="Genomic_DNA"/>
</dbReference>
<dbReference type="EMBL" id="AK121808">
    <property type="status" value="NOT_ANNOTATED_CDS"/>
    <property type="molecule type" value="mRNA"/>
</dbReference>
<dbReference type="RefSeq" id="XP_015637549.1">
    <property type="nucleotide sequence ID" value="XM_015782063.1"/>
</dbReference>
<dbReference type="SMR" id="Q6ATB4"/>
<dbReference type="FunCoup" id="Q6ATB4">
    <property type="interactions" value="1981"/>
</dbReference>
<dbReference type="STRING" id="39947.Q6ATB4"/>
<dbReference type="PaxDb" id="39947-Q6ATB4"/>
<dbReference type="EnsemblPlants" id="Os05t0161200-01">
    <property type="protein sequence ID" value="Os05t0161200-01"/>
    <property type="gene ID" value="Os05g0161200"/>
</dbReference>
<dbReference type="Gramene" id="Os05t0161200-01">
    <property type="protein sequence ID" value="Os05t0161200-01"/>
    <property type="gene ID" value="Os05g0161200"/>
</dbReference>
<dbReference type="KEGG" id="dosa:Os05g0161200"/>
<dbReference type="eggNOG" id="KOG1157">
    <property type="taxonomic scope" value="Eukaryota"/>
</dbReference>
<dbReference type="HOGENOM" id="CLU_022292_1_0_1"/>
<dbReference type="InParanoid" id="Q6ATB4"/>
<dbReference type="OMA" id="CYRTREV"/>
<dbReference type="OrthoDB" id="427950at2759"/>
<dbReference type="Proteomes" id="UP000000763">
    <property type="component" value="Chromosome 5"/>
</dbReference>
<dbReference type="Proteomes" id="UP000007752">
    <property type="component" value="Chromosome 5"/>
</dbReference>
<dbReference type="Proteomes" id="UP000059680">
    <property type="component" value="Chromosome 5"/>
</dbReference>
<dbReference type="GO" id="GO:0009507">
    <property type="term" value="C:chloroplast"/>
    <property type="evidence" value="ECO:0000314"/>
    <property type="project" value="UniProtKB"/>
</dbReference>
<dbReference type="GO" id="GO:0005524">
    <property type="term" value="F:ATP binding"/>
    <property type="evidence" value="ECO:0007669"/>
    <property type="project" value="UniProtKB-KW"/>
</dbReference>
<dbReference type="GO" id="GO:0005509">
    <property type="term" value="F:calcium ion binding"/>
    <property type="evidence" value="ECO:0007669"/>
    <property type="project" value="InterPro"/>
</dbReference>
<dbReference type="GO" id="GO:0005525">
    <property type="term" value="F:GTP binding"/>
    <property type="evidence" value="ECO:0007669"/>
    <property type="project" value="UniProtKB-KW"/>
</dbReference>
<dbReference type="GO" id="GO:0008728">
    <property type="term" value="F:GTP diphosphokinase activity"/>
    <property type="evidence" value="ECO:0000314"/>
    <property type="project" value="UniProtKB"/>
</dbReference>
<dbReference type="GO" id="GO:0016301">
    <property type="term" value="F:kinase activity"/>
    <property type="evidence" value="ECO:0007669"/>
    <property type="project" value="UniProtKB-KW"/>
</dbReference>
<dbReference type="GO" id="GO:0015969">
    <property type="term" value="P:guanosine tetraphosphate metabolic process"/>
    <property type="evidence" value="ECO:0007669"/>
    <property type="project" value="InterPro"/>
</dbReference>
<dbReference type="CDD" id="cd00051">
    <property type="entry name" value="EFh"/>
    <property type="match status" value="1"/>
</dbReference>
<dbReference type="CDD" id="cd05399">
    <property type="entry name" value="NT_Rel-Spo_like"/>
    <property type="match status" value="1"/>
</dbReference>
<dbReference type="FunFam" id="1.10.238.10:FF:000287">
    <property type="entry name" value="Probable GTP diphosphokinase CRSH, chloroplastic"/>
    <property type="match status" value="1"/>
</dbReference>
<dbReference type="FunFam" id="1.10.3210.10:FF:000019">
    <property type="entry name" value="Probable GTP diphosphokinase CRSH, chloroplastic"/>
    <property type="match status" value="1"/>
</dbReference>
<dbReference type="FunFam" id="3.30.460.10:FF:000025">
    <property type="entry name" value="probable GTP diphosphokinase CRSH, chloroplastic"/>
    <property type="match status" value="1"/>
</dbReference>
<dbReference type="Gene3D" id="3.30.460.10">
    <property type="entry name" value="Beta Polymerase, domain 2"/>
    <property type="match status" value="1"/>
</dbReference>
<dbReference type="Gene3D" id="1.10.238.10">
    <property type="entry name" value="EF-hand"/>
    <property type="match status" value="1"/>
</dbReference>
<dbReference type="Gene3D" id="1.10.3210.10">
    <property type="entry name" value="Hypothetical protein af1432"/>
    <property type="match status" value="1"/>
</dbReference>
<dbReference type="InterPro" id="IPR011992">
    <property type="entry name" value="EF-hand-dom_pair"/>
</dbReference>
<dbReference type="InterPro" id="IPR018247">
    <property type="entry name" value="EF_Hand_1_Ca_BS"/>
</dbReference>
<dbReference type="InterPro" id="IPR002048">
    <property type="entry name" value="EF_hand_dom"/>
</dbReference>
<dbReference type="InterPro" id="IPR006674">
    <property type="entry name" value="HD_domain"/>
</dbReference>
<dbReference type="InterPro" id="IPR043519">
    <property type="entry name" value="NT_sf"/>
</dbReference>
<dbReference type="InterPro" id="IPR007685">
    <property type="entry name" value="RelA_SpoT"/>
</dbReference>
<dbReference type="PANTHER" id="PTHR21262:SF12">
    <property type="entry name" value="GTP DIPHOSPHOKINASE CRSH, CHLOROPLASTIC-RELATED"/>
    <property type="match status" value="1"/>
</dbReference>
<dbReference type="PANTHER" id="PTHR21262">
    <property type="entry name" value="GUANOSINE-3',5'-BIS DIPHOSPHATE 3'-PYROPHOSPHOHYDROLASE"/>
    <property type="match status" value="1"/>
</dbReference>
<dbReference type="Pfam" id="PF13499">
    <property type="entry name" value="EF-hand_7"/>
    <property type="match status" value="1"/>
</dbReference>
<dbReference type="Pfam" id="PF13328">
    <property type="entry name" value="HD_4"/>
    <property type="match status" value="1"/>
</dbReference>
<dbReference type="Pfam" id="PF04607">
    <property type="entry name" value="RelA_SpoT"/>
    <property type="match status" value="1"/>
</dbReference>
<dbReference type="SMART" id="SM00054">
    <property type="entry name" value="EFh"/>
    <property type="match status" value="2"/>
</dbReference>
<dbReference type="SMART" id="SM00954">
    <property type="entry name" value="RelA_SpoT"/>
    <property type="match status" value="1"/>
</dbReference>
<dbReference type="SUPFAM" id="SSF47473">
    <property type="entry name" value="EF-hand"/>
    <property type="match status" value="1"/>
</dbReference>
<dbReference type="SUPFAM" id="SSF109604">
    <property type="entry name" value="HD-domain/PDEase-like"/>
    <property type="match status" value="1"/>
</dbReference>
<dbReference type="SUPFAM" id="SSF81301">
    <property type="entry name" value="Nucleotidyltransferase"/>
    <property type="match status" value="1"/>
</dbReference>
<dbReference type="PROSITE" id="PS00018">
    <property type="entry name" value="EF_HAND_1"/>
    <property type="match status" value="2"/>
</dbReference>
<dbReference type="PROSITE" id="PS50222">
    <property type="entry name" value="EF_HAND_2"/>
    <property type="match status" value="2"/>
</dbReference>
<dbReference type="PROSITE" id="PS51831">
    <property type="entry name" value="HD"/>
    <property type="match status" value="1"/>
</dbReference>
<keyword id="KW-0067">ATP-binding</keyword>
<keyword id="KW-0106">Calcium</keyword>
<keyword id="KW-0150">Chloroplast</keyword>
<keyword id="KW-0342">GTP-binding</keyword>
<keyword id="KW-0418">Kinase</keyword>
<keyword id="KW-0479">Metal-binding</keyword>
<keyword id="KW-0547">Nucleotide-binding</keyword>
<keyword id="KW-0934">Plastid</keyword>
<keyword id="KW-1185">Reference proteome</keyword>
<keyword id="KW-0677">Repeat</keyword>
<keyword id="KW-0346">Stress response</keyword>
<keyword id="KW-0808">Transferase</keyword>
<keyword id="KW-0809">Transit peptide</keyword>
<sequence length="583" mass="64143">MATAATTSAAAIPTGGGGRRQHPHPRRPGLRPRRLHRLRLPAQAAAAAAASSPSTSSSSSSSSTPAEGGGRLVAELVGAFNELTGRMGEGLATSSSSRLLFRALKLALPALRDGDGGRALARALAIAASLADLQMDAEVISAGILREALDAGAISMRDVKSEIGISTAHLLHESLRLKHAPSKLDVLDDESASALRKFCLSYYDIRAVILELALKLDMMRHLDCLPRYLQRIKSLEVLKIYAPLAHAVGAGNLSLELEDLSFRYLFPHSYDHIDQWLRSQETENKLLIDSYKEQLLQALKDDDELSQIVQDISIQGRYKSRFSTMKKLVKDGRKPEEVNDILALRVILEPRCDGSSLDWGPRACHRTHEIIQAMWKEVPGRTKNYVTRPKENGYQSLHVAIDVSEPGKMRPLMEIQIRTKEMHKFAVGGEASHSLYKGGLTDPGEAKRLKAIMLAAAELAAMRLRDLPASDQGDSNCTNRAFCQLDKNGDGRISIEELTEVMEDLGAGGKDAKELMHLLDANSDGSLSSDEFEAFQRQIELMRSLDDKDDRYRKILKEKLQTIDSAGLIQVYRKQLGDKLLVS</sequence>
<comment type="function">
    <text evidence="5">Possesses calcium-dependent ppGpp (guanosine 3'-diphosphate 5'-diphosphate) synthetase activity in vitro and is able to functionally complement E.coli relA mutants. May be involved in a rapid plant ppGpp-mediated response to pathogens and other stresses.</text>
</comment>
<comment type="catalytic activity">
    <reaction evidence="5">
        <text>GTP + ATP = guanosine 3'-diphosphate 5'-triphosphate + AMP</text>
        <dbReference type="Rhea" id="RHEA:22088"/>
        <dbReference type="ChEBI" id="CHEBI:30616"/>
        <dbReference type="ChEBI" id="CHEBI:37565"/>
        <dbReference type="ChEBI" id="CHEBI:142410"/>
        <dbReference type="ChEBI" id="CHEBI:456215"/>
        <dbReference type="EC" id="2.7.6.5"/>
    </reaction>
    <physiologicalReaction direction="right-to-left" evidence="5">
        <dbReference type="Rhea" id="RHEA:22090"/>
    </physiologicalReaction>
</comment>
<comment type="activity regulation">
    <text evidence="5">Activated by calcium.</text>
</comment>
<comment type="subcellular location">
    <subcellularLocation>
        <location evidence="5">Plastid</location>
        <location evidence="5">Chloroplast</location>
    </subcellularLocation>
</comment>
<comment type="tissue specificity">
    <text evidence="5">Expressed in roots and shoots.</text>
</comment>
<comment type="domain">
    <text evidence="9">The calcium-binding sites of the 2 EF-hand domains are required for enzyme activity.</text>
</comment>
<comment type="similarity">
    <text evidence="8">Belongs to the RelA/SpoT family.</text>
</comment>
<protein>
    <recommendedName>
        <fullName evidence="8">GTP diphosphokinase CRSH1, chloroplastic</fullName>
        <ecNumber evidence="5">2.7.6.5</ecNumber>
    </recommendedName>
    <alternativeName>
        <fullName evidence="6">Calcium-activated RelA/Spot homolog 1</fullName>
        <shortName evidence="6">OsCRSH1</shortName>
    </alternativeName>
    <alternativeName>
        <fullName evidence="6">ppGpp synthetase CRSH1</fullName>
    </alternativeName>
</protein>
<gene>
    <name evidence="6" type="primary">CRSH1</name>
    <name evidence="7" type="synonym">RELA2</name>
    <name evidence="11" type="ordered locus">Os05g0161200</name>
    <name evidence="8" type="ordered locus">LOC_Os05g06890</name>
    <name evidence="12" type="ORF">OsJ_17215</name>
    <name evidence="10" type="ORF">OSJNBa0034O12.15</name>
</gene>
<reference key="1">
    <citation type="submission" date="2000-05" db="EMBL/GenBank/DDBJ databases">
        <title>Rice cDNA encoding plastid ribosomal protein L11.</title>
        <authorList>
            <person name="Tozawa Y."/>
            <person name="Satsu H."/>
            <person name="Ito Y."/>
            <person name="Ochi K."/>
        </authorList>
    </citation>
    <scope>NUCLEOTIDE SEQUENCE [MRNA]</scope>
    <source>
        <strain>cv. Nipponbare</strain>
    </source>
</reference>
<reference key="2">
    <citation type="journal article" date="2005" name="Mol. Genet. Genomics">
        <title>A fine physical map of the rice chromosome 5.</title>
        <authorList>
            <person name="Cheng C.-H."/>
            <person name="Chung M.C."/>
            <person name="Liu S.-M."/>
            <person name="Chen S.-K."/>
            <person name="Kao F.Y."/>
            <person name="Lin S.-J."/>
            <person name="Hsiao S.-H."/>
            <person name="Tseng I.C."/>
            <person name="Hsing Y.-I.C."/>
            <person name="Wu H.-P."/>
            <person name="Chen C.-S."/>
            <person name="Shaw J.-F."/>
            <person name="Wu J."/>
            <person name="Matsumoto T."/>
            <person name="Sasaki T."/>
            <person name="Chen H.-C."/>
            <person name="Chow T.-Y."/>
        </authorList>
    </citation>
    <scope>NUCLEOTIDE SEQUENCE [LARGE SCALE GENOMIC DNA]</scope>
    <source>
        <strain>cv. Nipponbare</strain>
    </source>
</reference>
<reference key="3">
    <citation type="journal article" date="2005" name="Nature">
        <title>The map-based sequence of the rice genome.</title>
        <authorList>
            <consortium name="International rice genome sequencing project (IRGSP)"/>
        </authorList>
    </citation>
    <scope>NUCLEOTIDE SEQUENCE [LARGE SCALE GENOMIC DNA]</scope>
    <source>
        <strain>cv. Nipponbare</strain>
    </source>
</reference>
<reference key="4">
    <citation type="journal article" date="2008" name="Nucleic Acids Res.">
        <title>The rice annotation project database (RAP-DB): 2008 update.</title>
        <authorList>
            <consortium name="The rice annotation project (RAP)"/>
        </authorList>
    </citation>
    <scope>GENOME REANNOTATION</scope>
    <source>
        <strain>cv. Nipponbare</strain>
    </source>
</reference>
<reference key="5">
    <citation type="journal article" date="2013" name="Rice">
        <title>Improvement of the Oryza sativa Nipponbare reference genome using next generation sequence and optical map data.</title>
        <authorList>
            <person name="Kawahara Y."/>
            <person name="de la Bastide M."/>
            <person name="Hamilton J.P."/>
            <person name="Kanamori H."/>
            <person name="McCombie W.R."/>
            <person name="Ouyang S."/>
            <person name="Schwartz D.C."/>
            <person name="Tanaka T."/>
            <person name="Wu J."/>
            <person name="Zhou S."/>
            <person name="Childs K.L."/>
            <person name="Davidson R.M."/>
            <person name="Lin H."/>
            <person name="Quesada-Ocampo L."/>
            <person name="Vaillancourt B."/>
            <person name="Sakai H."/>
            <person name="Lee S.S."/>
            <person name="Kim J."/>
            <person name="Numa H."/>
            <person name="Itoh T."/>
            <person name="Buell C.R."/>
            <person name="Matsumoto T."/>
        </authorList>
    </citation>
    <scope>GENOME REANNOTATION</scope>
    <source>
        <strain>cv. Nipponbare</strain>
    </source>
</reference>
<reference key="6">
    <citation type="journal article" date="2005" name="PLoS Biol.">
        <title>The genomes of Oryza sativa: a history of duplications.</title>
        <authorList>
            <person name="Yu J."/>
            <person name="Wang J."/>
            <person name="Lin W."/>
            <person name="Li S."/>
            <person name="Li H."/>
            <person name="Zhou J."/>
            <person name="Ni P."/>
            <person name="Dong W."/>
            <person name="Hu S."/>
            <person name="Zeng C."/>
            <person name="Zhang J."/>
            <person name="Zhang Y."/>
            <person name="Li R."/>
            <person name="Xu Z."/>
            <person name="Li S."/>
            <person name="Li X."/>
            <person name="Zheng H."/>
            <person name="Cong L."/>
            <person name="Lin L."/>
            <person name="Yin J."/>
            <person name="Geng J."/>
            <person name="Li G."/>
            <person name="Shi J."/>
            <person name="Liu J."/>
            <person name="Lv H."/>
            <person name="Li J."/>
            <person name="Wang J."/>
            <person name="Deng Y."/>
            <person name="Ran L."/>
            <person name="Shi X."/>
            <person name="Wang X."/>
            <person name="Wu Q."/>
            <person name="Li C."/>
            <person name="Ren X."/>
            <person name="Wang J."/>
            <person name="Wang X."/>
            <person name="Li D."/>
            <person name="Liu D."/>
            <person name="Zhang X."/>
            <person name="Ji Z."/>
            <person name="Zhao W."/>
            <person name="Sun Y."/>
            <person name="Zhang Z."/>
            <person name="Bao J."/>
            <person name="Han Y."/>
            <person name="Dong L."/>
            <person name="Ji J."/>
            <person name="Chen P."/>
            <person name="Wu S."/>
            <person name="Liu J."/>
            <person name="Xiao Y."/>
            <person name="Bu D."/>
            <person name="Tan J."/>
            <person name="Yang L."/>
            <person name="Ye C."/>
            <person name="Zhang J."/>
            <person name="Xu J."/>
            <person name="Zhou Y."/>
            <person name="Yu Y."/>
            <person name="Zhang B."/>
            <person name="Zhuang S."/>
            <person name="Wei H."/>
            <person name="Liu B."/>
            <person name="Lei M."/>
            <person name="Yu H."/>
            <person name="Li Y."/>
            <person name="Xu H."/>
            <person name="Wei S."/>
            <person name="He X."/>
            <person name="Fang L."/>
            <person name="Zhang Z."/>
            <person name="Zhang Y."/>
            <person name="Huang X."/>
            <person name="Su Z."/>
            <person name="Tong W."/>
            <person name="Li J."/>
            <person name="Tong Z."/>
            <person name="Li S."/>
            <person name="Ye J."/>
            <person name="Wang L."/>
            <person name="Fang L."/>
            <person name="Lei T."/>
            <person name="Chen C.-S."/>
            <person name="Chen H.-C."/>
            <person name="Xu Z."/>
            <person name="Li H."/>
            <person name="Huang H."/>
            <person name="Zhang F."/>
            <person name="Xu H."/>
            <person name="Li N."/>
            <person name="Zhao C."/>
            <person name="Li S."/>
            <person name="Dong L."/>
            <person name="Huang Y."/>
            <person name="Li L."/>
            <person name="Xi Y."/>
            <person name="Qi Q."/>
            <person name="Li W."/>
            <person name="Zhang B."/>
            <person name="Hu W."/>
            <person name="Zhang Y."/>
            <person name="Tian X."/>
            <person name="Jiao Y."/>
            <person name="Liang X."/>
            <person name="Jin J."/>
            <person name="Gao L."/>
            <person name="Zheng W."/>
            <person name="Hao B."/>
            <person name="Liu S.-M."/>
            <person name="Wang W."/>
            <person name="Yuan L."/>
            <person name="Cao M."/>
            <person name="McDermott J."/>
            <person name="Samudrala R."/>
            <person name="Wang J."/>
            <person name="Wong G.K.-S."/>
            <person name="Yang H."/>
        </authorList>
    </citation>
    <scope>NUCLEOTIDE SEQUENCE [LARGE SCALE GENOMIC DNA]</scope>
    <source>
        <strain>cv. Nipponbare</strain>
    </source>
</reference>
<reference key="7">
    <citation type="journal article" date="2003" name="Science">
        <title>Collection, mapping, and annotation of over 28,000 cDNA clones from japonica rice.</title>
        <authorList>
            <consortium name="The rice full-length cDNA consortium"/>
        </authorList>
    </citation>
    <scope>NUCLEOTIDE SEQUENCE [LARGE SCALE MRNA]</scope>
    <source>
        <strain>cv. Nipponbare</strain>
    </source>
</reference>
<reference key="8">
    <citation type="journal article" date="2007" name="J. Biol. Chem.">
        <title>Calcium-activated (p)ppGpp synthetase in chloroplasts of land plants.</title>
        <authorList>
            <person name="Tozawa Y."/>
            <person name="Nozawa A."/>
            <person name="Kanno T."/>
            <person name="Narisawa T."/>
            <person name="Masuda S."/>
            <person name="Kasai K."/>
            <person name="Nanamiya H."/>
        </authorList>
    </citation>
    <scope>FUNCTION</scope>
    <scope>CATALYTIC ACTIVITY</scope>
    <scope>ACTIVITY REGULATION</scope>
    <scope>SUBCELLULAR LOCATION</scope>
    <scope>DOMAIN</scope>
    <scope>TISSUE SPECIFICITY</scope>
</reference>
<accession>Q6ATB4</accession>
<accession>A0A0P0WIB5</accession>
<accession>Q9AYT4</accession>
<organism>
    <name type="scientific">Oryza sativa subsp. japonica</name>
    <name type="common">Rice</name>
    <dbReference type="NCBI Taxonomy" id="39947"/>
    <lineage>
        <taxon>Eukaryota</taxon>
        <taxon>Viridiplantae</taxon>
        <taxon>Streptophyta</taxon>
        <taxon>Embryophyta</taxon>
        <taxon>Tracheophyta</taxon>
        <taxon>Spermatophyta</taxon>
        <taxon>Magnoliopsida</taxon>
        <taxon>Liliopsida</taxon>
        <taxon>Poales</taxon>
        <taxon>Poaceae</taxon>
        <taxon>BOP clade</taxon>
        <taxon>Oryzoideae</taxon>
        <taxon>Oryzeae</taxon>
        <taxon>Oryzinae</taxon>
        <taxon>Oryza</taxon>
        <taxon>Oryza sativa</taxon>
    </lineage>
</organism>